<dbReference type="EC" id="3.5.1.108" evidence="1"/>
<dbReference type="EMBL" id="CP001396">
    <property type="protein sequence ID" value="ACR65734.1"/>
    <property type="molecule type" value="Genomic_DNA"/>
</dbReference>
<dbReference type="RefSeq" id="WP_000595482.1">
    <property type="nucleotide sequence ID" value="NC_012759.1"/>
</dbReference>
<dbReference type="SMR" id="C4ZRJ1"/>
<dbReference type="GeneID" id="93777338"/>
<dbReference type="KEGG" id="ebw:BWG_0091"/>
<dbReference type="HOGENOM" id="CLU_046528_1_0_6"/>
<dbReference type="UniPathway" id="UPA00359">
    <property type="reaction ID" value="UER00478"/>
</dbReference>
<dbReference type="GO" id="GO:0016020">
    <property type="term" value="C:membrane"/>
    <property type="evidence" value="ECO:0007669"/>
    <property type="project" value="GOC"/>
</dbReference>
<dbReference type="GO" id="GO:0046872">
    <property type="term" value="F:metal ion binding"/>
    <property type="evidence" value="ECO:0007669"/>
    <property type="project" value="UniProtKB-KW"/>
</dbReference>
<dbReference type="GO" id="GO:0103117">
    <property type="term" value="F:UDP-3-O-acyl-N-acetylglucosamine deacetylase activity"/>
    <property type="evidence" value="ECO:0007669"/>
    <property type="project" value="UniProtKB-UniRule"/>
</dbReference>
<dbReference type="GO" id="GO:0009245">
    <property type="term" value="P:lipid A biosynthetic process"/>
    <property type="evidence" value="ECO:0007669"/>
    <property type="project" value="UniProtKB-UniRule"/>
</dbReference>
<dbReference type="FunFam" id="3.30.1700.10:FF:000001">
    <property type="entry name" value="UDP-3-O-acyl-N-acetylglucosamine deacetylase"/>
    <property type="match status" value="1"/>
</dbReference>
<dbReference type="FunFam" id="3.30.230.20:FF:000001">
    <property type="entry name" value="UDP-3-O-acyl-N-acetylglucosamine deacetylase"/>
    <property type="match status" value="1"/>
</dbReference>
<dbReference type="Gene3D" id="3.30.230.20">
    <property type="entry name" value="lpxc deacetylase, domain 1"/>
    <property type="match status" value="1"/>
</dbReference>
<dbReference type="Gene3D" id="3.30.1700.10">
    <property type="entry name" value="lpxc deacetylase, domain 2"/>
    <property type="match status" value="1"/>
</dbReference>
<dbReference type="HAMAP" id="MF_00388">
    <property type="entry name" value="LpxC"/>
    <property type="match status" value="1"/>
</dbReference>
<dbReference type="InterPro" id="IPR020568">
    <property type="entry name" value="Ribosomal_Su5_D2-typ_SF"/>
</dbReference>
<dbReference type="InterPro" id="IPR004463">
    <property type="entry name" value="UDP-acyl_GlcNac_deAcase"/>
</dbReference>
<dbReference type="InterPro" id="IPR011334">
    <property type="entry name" value="UDP-acyl_GlcNac_deAcase_C"/>
</dbReference>
<dbReference type="InterPro" id="IPR015870">
    <property type="entry name" value="UDP-acyl_N-AcGlcN_deAcase_N"/>
</dbReference>
<dbReference type="NCBIfam" id="TIGR00325">
    <property type="entry name" value="lpxC"/>
    <property type="match status" value="1"/>
</dbReference>
<dbReference type="PANTHER" id="PTHR33694">
    <property type="entry name" value="UDP-3-O-ACYL-N-ACETYLGLUCOSAMINE DEACETYLASE 1, MITOCHONDRIAL-RELATED"/>
    <property type="match status" value="1"/>
</dbReference>
<dbReference type="PANTHER" id="PTHR33694:SF1">
    <property type="entry name" value="UDP-3-O-ACYL-N-ACETYLGLUCOSAMINE DEACETYLASE 1, MITOCHONDRIAL-RELATED"/>
    <property type="match status" value="1"/>
</dbReference>
<dbReference type="Pfam" id="PF03331">
    <property type="entry name" value="LpxC"/>
    <property type="match status" value="1"/>
</dbReference>
<dbReference type="SUPFAM" id="SSF54211">
    <property type="entry name" value="Ribosomal protein S5 domain 2-like"/>
    <property type="match status" value="2"/>
</dbReference>
<name>LPXC_ECOBW</name>
<evidence type="ECO:0000255" key="1">
    <source>
        <dbReference type="HAMAP-Rule" id="MF_00388"/>
    </source>
</evidence>
<gene>
    <name evidence="1" type="primary">lpxC</name>
    <name type="ordered locus">BWG_0091</name>
</gene>
<feature type="chain" id="PRO_1000205803" description="UDP-3-O-acyl-N-acetylglucosamine deacetylase">
    <location>
        <begin position="1"/>
        <end position="305"/>
    </location>
</feature>
<feature type="active site" description="Proton donor" evidence="1">
    <location>
        <position position="265"/>
    </location>
</feature>
<feature type="binding site" evidence="1">
    <location>
        <position position="79"/>
    </location>
    <ligand>
        <name>Zn(2+)</name>
        <dbReference type="ChEBI" id="CHEBI:29105"/>
    </ligand>
</feature>
<feature type="binding site" evidence="1">
    <location>
        <position position="238"/>
    </location>
    <ligand>
        <name>Zn(2+)</name>
        <dbReference type="ChEBI" id="CHEBI:29105"/>
    </ligand>
</feature>
<feature type="binding site" evidence="1">
    <location>
        <position position="242"/>
    </location>
    <ligand>
        <name>Zn(2+)</name>
        <dbReference type="ChEBI" id="CHEBI:29105"/>
    </ligand>
</feature>
<reference key="1">
    <citation type="journal article" date="2009" name="J. Bacteriol.">
        <title>Genomic sequencing reveals regulatory mutations and recombinational events in the widely used MC4100 lineage of Escherichia coli K-12.</title>
        <authorList>
            <person name="Ferenci T."/>
            <person name="Zhou Z."/>
            <person name="Betteridge T."/>
            <person name="Ren Y."/>
            <person name="Liu Y."/>
            <person name="Feng L."/>
            <person name="Reeves P.R."/>
            <person name="Wang L."/>
        </authorList>
    </citation>
    <scope>NUCLEOTIDE SEQUENCE [LARGE SCALE GENOMIC DNA]</scope>
    <source>
        <strain>K12 / MC4100 / BW2952</strain>
    </source>
</reference>
<keyword id="KW-0378">Hydrolase</keyword>
<keyword id="KW-0441">Lipid A biosynthesis</keyword>
<keyword id="KW-0444">Lipid biosynthesis</keyword>
<keyword id="KW-0443">Lipid metabolism</keyword>
<keyword id="KW-0479">Metal-binding</keyword>
<keyword id="KW-0862">Zinc</keyword>
<proteinExistence type="inferred from homology"/>
<protein>
    <recommendedName>
        <fullName evidence="1">UDP-3-O-acyl-N-acetylglucosamine deacetylase</fullName>
        <shortName evidence="1">UDP-3-O-acyl-GlcNAc deacetylase</shortName>
        <ecNumber evidence="1">3.5.1.108</ecNumber>
    </recommendedName>
    <alternativeName>
        <fullName evidence="1">UDP-3-O-[R-3-hydroxymyristoyl]-N-acetylglucosamine deacetylase</fullName>
    </alternativeName>
</protein>
<organism>
    <name type="scientific">Escherichia coli (strain K12 / MC4100 / BW2952)</name>
    <dbReference type="NCBI Taxonomy" id="595496"/>
    <lineage>
        <taxon>Bacteria</taxon>
        <taxon>Pseudomonadati</taxon>
        <taxon>Pseudomonadota</taxon>
        <taxon>Gammaproteobacteria</taxon>
        <taxon>Enterobacterales</taxon>
        <taxon>Enterobacteriaceae</taxon>
        <taxon>Escherichia</taxon>
    </lineage>
</organism>
<comment type="function">
    <text evidence="1">Catalyzes the hydrolysis of UDP-3-O-myristoyl-N-acetylglucosamine to form UDP-3-O-myristoylglucosamine and acetate, the committed step in lipid A biosynthesis.</text>
</comment>
<comment type="catalytic activity">
    <reaction evidence="1">
        <text>a UDP-3-O-[(3R)-3-hydroxyacyl]-N-acetyl-alpha-D-glucosamine + H2O = a UDP-3-O-[(3R)-3-hydroxyacyl]-alpha-D-glucosamine + acetate</text>
        <dbReference type="Rhea" id="RHEA:67816"/>
        <dbReference type="ChEBI" id="CHEBI:15377"/>
        <dbReference type="ChEBI" id="CHEBI:30089"/>
        <dbReference type="ChEBI" id="CHEBI:137740"/>
        <dbReference type="ChEBI" id="CHEBI:173225"/>
        <dbReference type="EC" id="3.5.1.108"/>
    </reaction>
</comment>
<comment type="cofactor">
    <cofactor evidence="1">
        <name>Zn(2+)</name>
        <dbReference type="ChEBI" id="CHEBI:29105"/>
    </cofactor>
</comment>
<comment type="pathway">
    <text evidence="1">Glycolipid biosynthesis; lipid IV(A) biosynthesis; lipid IV(A) from (3R)-3-hydroxytetradecanoyl-[acyl-carrier-protein] and UDP-N-acetyl-alpha-D-glucosamine: step 2/6.</text>
</comment>
<comment type="similarity">
    <text evidence="1">Belongs to the LpxC family.</text>
</comment>
<sequence>MIKQRTLKRIVQATGVGLHTGKKVTLTLRPAPANTGVIYRRTDLNPPVDFPADAKSVRDTMLCTCLVNEHDVRISTVEHLNAALAGLGIDNIVIEVNAPEIPIMDGSAAPFVYLLLDAGIDELNCAKKFVRIKETVRVEDGDKWAEFKPYNGFSLDFTIDFNHPAIDSSNQRYAMNFSADAFMRQISRARTFGFMRDIEYLQSRGLCLGGSFDCAIVVDDYRVLNEDGLRFEDEFVRHKMLDAIGDLFMCGHNIIGAFTAYKSGHALNNKLLQAVLAKQEAWEYVTFQDDAELPLAFKAPSAVLA</sequence>
<accession>C4ZRJ1</accession>